<keyword id="KW-0131">Cell cycle</keyword>
<keyword id="KW-0132">Cell division</keyword>
<keyword id="KW-0997">Cell inner membrane</keyword>
<keyword id="KW-1003">Cell membrane</keyword>
<keyword id="KW-0133">Cell shape</keyword>
<keyword id="KW-0961">Cell wall biogenesis/degradation</keyword>
<keyword id="KW-0328">Glycosyltransferase</keyword>
<keyword id="KW-0472">Membrane</keyword>
<keyword id="KW-0573">Peptidoglycan synthesis</keyword>
<keyword id="KW-0808">Transferase</keyword>
<organism>
    <name type="scientific">Ectopseudomonas mendocina (strain ymp)</name>
    <name type="common">Pseudomonas mendocina</name>
    <dbReference type="NCBI Taxonomy" id="399739"/>
    <lineage>
        <taxon>Bacteria</taxon>
        <taxon>Pseudomonadati</taxon>
        <taxon>Pseudomonadota</taxon>
        <taxon>Gammaproteobacteria</taxon>
        <taxon>Pseudomonadales</taxon>
        <taxon>Pseudomonadaceae</taxon>
        <taxon>Ectopseudomonas</taxon>
    </lineage>
</organism>
<name>MURG_ECTM1</name>
<protein>
    <recommendedName>
        <fullName evidence="1">UDP-N-acetylglucosamine--N-acetylmuramyl-(pentapeptide) pyrophosphoryl-undecaprenol N-acetylglucosamine transferase</fullName>
        <ecNumber evidence="1">2.4.1.227</ecNumber>
    </recommendedName>
    <alternativeName>
        <fullName evidence="1">Undecaprenyl-PP-MurNAc-pentapeptide-UDPGlcNAc GlcNAc transferase</fullName>
    </alternativeName>
</protein>
<sequence length="356" mass="38130">MRGNVLIMAGGTGGHVFPALACAREFQTRGYAVHWLGTSRGIENELVPQAGLPLHLINVSGLRGKGKLSLLKAPFQLLRSLLQARRIVRELQPVCVLGMGGYVTGPGGLAARLAGVPLVIHEQNAVAGTANRLLSRIATRICEAFPNTFGASDKRRTTGNPVREELFLETPREPLVGRKPKLLVLGGSLGAEPLNKLLPAALAELPTELRPQVFHQAGKQHAEVTAERYRDAAVEAEVAPFIKDMARAYGWADLVICRAGALTVSELAAAGLPSFLVPLPHAIDDHQSRNAEYLAKEGAAVLLPQHATDAAKLAAQLTEVLMHLEKLNVMGATARRLAKPDATRTVVDICQEVMRG</sequence>
<proteinExistence type="inferred from homology"/>
<feature type="chain" id="PRO_1000057252" description="UDP-N-acetylglucosamine--N-acetylmuramyl-(pentapeptide) pyrophosphoryl-undecaprenol N-acetylglucosamine transferase">
    <location>
        <begin position="1"/>
        <end position="356"/>
    </location>
</feature>
<feature type="binding site" evidence="1">
    <location>
        <begin position="12"/>
        <end position="14"/>
    </location>
    <ligand>
        <name>UDP-N-acetyl-alpha-D-glucosamine</name>
        <dbReference type="ChEBI" id="CHEBI:57705"/>
    </ligand>
</feature>
<feature type="binding site" evidence="1">
    <location>
        <position position="124"/>
    </location>
    <ligand>
        <name>UDP-N-acetyl-alpha-D-glucosamine</name>
        <dbReference type="ChEBI" id="CHEBI:57705"/>
    </ligand>
</feature>
<feature type="binding site" evidence="1">
    <location>
        <position position="163"/>
    </location>
    <ligand>
        <name>UDP-N-acetyl-alpha-D-glucosamine</name>
        <dbReference type="ChEBI" id="CHEBI:57705"/>
    </ligand>
</feature>
<feature type="binding site" evidence="1">
    <location>
        <position position="188"/>
    </location>
    <ligand>
        <name>UDP-N-acetyl-alpha-D-glucosamine</name>
        <dbReference type="ChEBI" id="CHEBI:57705"/>
    </ligand>
</feature>
<feature type="binding site" evidence="1">
    <location>
        <position position="242"/>
    </location>
    <ligand>
        <name>UDP-N-acetyl-alpha-D-glucosamine</name>
        <dbReference type="ChEBI" id="CHEBI:57705"/>
    </ligand>
</feature>
<feature type="binding site" evidence="1">
    <location>
        <begin position="261"/>
        <end position="266"/>
    </location>
    <ligand>
        <name>UDP-N-acetyl-alpha-D-glucosamine</name>
        <dbReference type="ChEBI" id="CHEBI:57705"/>
    </ligand>
</feature>
<feature type="binding site" evidence="1">
    <location>
        <position position="287"/>
    </location>
    <ligand>
        <name>UDP-N-acetyl-alpha-D-glucosamine</name>
        <dbReference type="ChEBI" id="CHEBI:57705"/>
    </ligand>
</feature>
<reference key="1">
    <citation type="submission" date="2007-04" db="EMBL/GenBank/DDBJ databases">
        <title>Complete sequence of Pseudomonas mendocina ymp.</title>
        <authorList>
            <consortium name="US DOE Joint Genome Institute"/>
            <person name="Copeland A."/>
            <person name="Lucas S."/>
            <person name="Lapidus A."/>
            <person name="Barry K."/>
            <person name="Glavina del Rio T."/>
            <person name="Dalin E."/>
            <person name="Tice H."/>
            <person name="Pitluck S."/>
            <person name="Kiss H."/>
            <person name="Brettin T."/>
            <person name="Detter J.C."/>
            <person name="Bruce D."/>
            <person name="Han C."/>
            <person name="Schmutz J."/>
            <person name="Larimer F."/>
            <person name="Land M."/>
            <person name="Hauser L."/>
            <person name="Kyrpides N."/>
            <person name="Mikhailova N."/>
            <person name="Hersman L."/>
            <person name="Dubois J."/>
            <person name="Maurice P."/>
            <person name="Richardson P."/>
        </authorList>
    </citation>
    <scope>NUCLEOTIDE SEQUENCE [LARGE SCALE GENOMIC DNA]</scope>
    <source>
        <strain>ymp</strain>
    </source>
</reference>
<dbReference type="EC" id="2.4.1.227" evidence="1"/>
<dbReference type="EMBL" id="CP000680">
    <property type="protein sequence ID" value="ABP83690.1"/>
    <property type="molecule type" value="Genomic_DNA"/>
</dbReference>
<dbReference type="SMR" id="A4XQS4"/>
<dbReference type="STRING" id="399739.Pmen_0922"/>
<dbReference type="CAZy" id="GT28">
    <property type="family name" value="Glycosyltransferase Family 28"/>
</dbReference>
<dbReference type="KEGG" id="pmy:Pmen_0922"/>
<dbReference type="PATRIC" id="fig|399739.8.peg.931"/>
<dbReference type="eggNOG" id="COG0707">
    <property type="taxonomic scope" value="Bacteria"/>
</dbReference>
<dbReference type="HOGENOM" id="CLU_037404_2_0_6"/>
<dbReference type="OrthoDB" id="9808936at2"/>
<dbReference type="UniPathway" id="UPA00219"/>
<dbReference type="GO" id="GO:0005886">
    <property type="term" value="C:plasma membrane"/>
    <property type="evidence" value="ECO:0007669"/>
    <property type="project" value="UniProtKB-SubCell"/>
</dbReference>
<dbReference type="GO" id="GO:0051991">
    <property type="term" value="F:UDP-N-acetyl-D-glucosamine:N-acetylmuramoyl-L-alanyl-D-glutamyl-meso-2,6-diaminopimelyl-D-alanyl-D-alanine-diphosphoundecaprenol 4-beta-N-acetylglucosaminlytransferase activity"/>
    <property type="evidence" value="ECO:0007669"/>
    <property type="project" value="RHEA"/>
</dbReference>
<dbReference type="GO" id="GO:0050511">
    <property type="term" value="F:undecaprenyldiphospho-muramoylpentapeptide beta-N-acetylglucosaminyltransferase activity"/>
    <property type="evidence" value="ECO:0007669"/>
    <property type="project" value="UniProtKB-UniRule"/>
</dbReference>
<dbReference type="GO" id="GO:0005975">
    <property type="term" value="P:carbohydrate metabolic process"/>
    <property type="evidence" value="ECO:0007669"/>
    <property type="project" value="InterPro"/>
</dbReference>
<dbReference type="GO" id="GO:0051301">
    <property type="term" value="P:cell division"/>
    <property type="evidence" value="ECO:0007669"/>
    <property type="project" value="UniProtKB-KW"/>
</dbReference>
<dbReference type="GO" id="GO:0071555">
    <property type="term" value="P:cell wall organization"/>
    <property type="evidence" value="ECO:0007669"/>
    <property type="project" value="UniProtKB-KW"/>
</dbReference>
<dbReference type="GO" id="GO:0030259">
    <property type="term" value="P:lipid glycosylation"/>
    <property type="evidence" value="ECO:0007669"/>
    <property type="project" value="UniProtKB-UniRule"/>
</dbReference>
<dbReference type="GO" id="GO:0009252">
    <property type="term" value="P:peptidoglycan biosynthetic process"/>
    <property type="evidence" value="ECO:0007669"/>
    <property type="project" value="UniProtKB-UniRule"/>
</dbReference>
<dbReference type="GO" id="GO:0008360">
    <property type="term" value="P:regulation of cell shape"/>
    <property type="evidence" value="ECO:0007669"/>
    <property type="project" value="UniProtKB-KW"/>
</dbReference>
<dbReference type="CDD" id="cd03785">
    <property type="entry name" value="GT28_MurG"/>
    <property type="match status" value="1"/>
</dbReference>
<dbReference type="Gene3D" id="3.40.50.2000">
    <property type="entry name" value="Glycogen Phosphorylase B"/>
    <property type="match status" value="2"/>
</dbReference>
<dbReference type="HAMAP" id="MF_00033">
    <property type="entry name" value="MurG"/>
    <property type="match status" value="1"/>
</dbReference>
<dbReference type="InterPro" id="IPR006009">
    <property type="entry name" value="GlcNAc_MurG"/>
</dbReference>
<dbReference type="InterPro" id="IPR007235">
    <property type="entry name" value="Glyco_trans_28_C"/>
</dbReference>
<dbReference type="InterPro" id="IPR004276">
    <property type="entry name" value="GlycoTrans_28_N"/>
</dbReference>
<dbReference type="NCBIfam" id="TIGR01133">
    <property type="entry name" value="murG"/>
    <property type="match status" value="1"/>
</dbReference>
<dbReference type="PANTHER" id="PTHR21015:SF22">
    <property type="entry name" value="GLYCOSYLTRANSFERASE"/>
    <property type="match status" value="1"/>
</dbReference>
<dbReference type="PANTHER" id="PTHR21015">
    <property type="entry name" value="UDP-N-ACETYLGLUCOSAMINE--N-ACETYLMURAMYL-(PENTAPEPTIDE) PYROPHOSPHORYL-UNDECAPRENOL N-ACETYLGLUCOSAMINE TRANSFERASE 1"/>
    <property type="match status" value="1"/>
</dbReference>
<dbReference type="Pfam" id="PF04101">
    <property type="entry name" value="Glyco_tran_28_C"/>
    <property type="match status" value="1"/>
</dbReference>
<dbReference type="Pfam" id="PF03033">
    <property type="entry name" value="Glyco_transf_28"/>
    <property type="match status" value="1"/>
</dbReference>
<dbReference type="SUPFAM" id="SSF53756">
    <property type="entry name" value="UDP-Glycosyltransferase/glycogen phosphorylase"/>
    <property type="match status" value="1"/>
</dbReference>
<gene>
    <name evidence="1" type="primary">murG</name>
    <name type="ordered locus">Pmen_0922</name>
</gene>
<comment type="function">
    <text evidence="1">Cell wall formation. Catalyzes the transfer of a GlcNAc subunit on undecaprenyl-pyrophosphoryl-MurNAc-pentapeptide (lipid intermediate I) to form undecaprenyl-pyrophosphoryl-MurNAc-(pentapeptide)GlcNAc (lipid intermediate II).</text>
</comment>
<comment type="catalytic activity">
    <reaction evidence="1">
        <text>di-trans,octa-cis-undecaprenyl diphospho-N-acetyl-alpha-D-muramoyl-L-alanyl-D-glutamyl-meso-2,6-diaminopimeloyl-D-alanyl-D-alanine + UDP-N-acetyl-alpha-D-glucosamine = di-trans,octa-cis-undecaprenyl diphospho-[N-acetyl-alpha-D-glucosaminyl-(1-&gt;4)]-N-acetyl-alpha-D-muramoyl-L-alanyl-D-glutamyl-meso-2,6-diaminopimeloyl-D-alanyl-D-alanine + UDP + H(+)</text>
        <dbReference type="Rhea" id="RHEA:31227"/>
        <dbReference type="ChEBI" id="CHEBI:15378"/>
        <dbReference type="ChEBI" id="CHEBI:57705"/>
        <dbReference type="ChEBI" id="CHEBI:58223"/>
        <dbReference type="ChEBI" id="CHEBI:61387"/>
        <dbReference type="ChEBI" id="CHEBI:61388"/>
        <dbReference type="EC" id="2.4.1.227"/>
    </reaction>
</comment>
<comment type="pathway">
    <text evidence="1">Cell wall biogenesis; peptidoglycan biosynthesis.</text>
</comment>
<comment type="subcellular location">
    <subcellularLocation>
        <location evidence="1">Cell inner membrane</location>
        <topology evidence="1">Peripheral membrane protein</topology>
        <orientation evidence="1">Cytoplasmic side</orientation>
    </subcellularLocation>
</comment>
<comment type="similarity">
    <text evidence="1">Belongs to the glycosyltransferase 28 family. MurG subfamily.</text>
</comment>
<accession>A4XQS4</accession>
<evidence type="ECO:0000255" key="1">
    <source>
        <dbReference type="HAMAP-Rule" id="MF_00033"/>
    </source>
</evidence>